<comment type="function">
    <text evidence="4 7">Flavoenzyme involved in polyamine back-conversion (PubMed:24634478). Catalyzes the oxidation of the secondary amino group of polyamines, such as spermine, spermidine and their acetyl derivatives (PubMed:24634478). Substrate preference is spermine &gt; spermidine &gt; N(1)-acetylspermine &gt; N(1)-acetylspermidine &gt; norspermine &gt; thermospermine (PubMed:24634478). No activity detected when putrescine is used as substrate (PubMed:24634478). May play a role in producing hydrogen peroxide for secondary wall thickening through lignin formation during anther development (Probable).</text>
</comment>
<comment type="catalytic activity">
    <reaction evidence="4">
        <text>spermine + O2 + H2O = 3-aminopropanal + spermidine + H2O2</text>
        <dbReference type="Rhea" id="RHEA:25804"/>
        <dbReference type="ChEBI" id="CHEBI:15377"/>
        <dbReference type="ChEBI" id="CHEBI:15379"/>
        <dbReference type="ChEBI" id="CHEBI:16240"/>
        <dbReference type="ChEBI" id="CHEBI:45725"/>
        <dbReference type="ChEBI" id="CHEBI:57834"/>
        <dbReference type="ChEBI" id="CHEBI:58374"/>
    </reaction>
</comment>
<comment type="catalytic activity">
    <reaction evidence="4">
        <text>N(1)-acetylspermine + O2 + H2O = 3-acetamidopropanal + spermidine + H2O2</text>
        <dbReference type="Rhea" id="RHEA:25800"/>
        <dbReference type="ChEBI" id="CHEBI:15377"/>
        <dbReference type="ChEBI" id="CHEBI:15379"/>
        <dbReference type="ChEBI" id="CHEBI:16240"/>
        <dbReference type="ChEBI" id="CHEBI:30322"/>
        <dbReference type="ChEBI" id="CHEBI:57834"/>
        <dbReference type="ChEBI" id="CHEBI:58101"/>
    </reaction>
</comment>
<comment type="catalytic activity">
    <reaction evidence="4">
        <text>norspermine + O2 + H2O = norspermidine + 3-aminopropanal + H2O2</text>
        <dbReference type="Rhea" id="RHEA:25816"/>
        <dbReference type="ChEBI" id="CHEBI:15377"/>
        <dbReference type="ChEBI" id="CHEBI:15379"/>
        <dbReference type="ChEBI" id="CHEBI:16240"/>
        <dbReference type="ChEBI" id="CHEBI:57920"/>
        <dbReference type="ChEBI" id="CHEBI:58374"/>
        <dbReference type="ChEBI" id="CHEBI:58704"/>
    </reaction>
</comment>
<comment type="catalytic activity">
    <reaction evidence="4">
        <text>spermidine + O2 + H2O = 3-aminopropanal + putrescine + H2O2</text>
        <dbReference type="Rhea" id="RHEA:25808"/>
        <dbReference type="ChEBI" id="CHEBI:15377"/>
        <dbReference type="ChEBI" id="CHEBI:15379"/>
        <dbReference type="ChEBI" id="CHEBI:16240"/>
        <dbReference type="ChEBI" id="CHEBI:57834"/>
        <dbReference type="ChEBI" id="CHEBI:58374"/>
        <dbReference type="ChEBI" id="CHEBI:326268"/>
    </reaction>
</comment>
<comment type="catalytic activity">
    <reaction evidence="4">
        <text>N(1)-acetylspermidine + O2 + H2O = 3-acetamidopropanal + putrescine + H2O2</text>
        <dbReference type="Rhea" id="RHEA:25812"/>
        <dbReference type="ChEBI" id="CHEBI:15377"/>
        <dbReference type="ChEBI" id="CHEBI:15379"/>
        <dbReference type="ChEBI" id="CHEBI:16240"/>
        <dbReference type="ChEBI" id="CHEBI:30322"/>
        <dbReference type="ChEBI" id="CHEBI:58324"/>
        <dbReference type="ChEBI" id="CHEBI:326268"/>
    </reaction>
</comment>
<comment type="catalytic activity">
    <reaction evidence="4">
        <text>thermospermine + O2 + H2O = 3-aminopropanal + spermidine + H2O2</text>
        <dbReference type="Rhea" id="RHEA:57836"/>
        <dbReference type="ChEBI" id="CHEBI:15377"/>
        <dbReference type="ChEBI" id="CHEBI:15379"/>
        <dbReference type="ChEBI" id="CHEBI:16240"/>
        <dbReference type="ChEBI" id="CHEBI:57834"/>
        <dbReference type="ChEBI" id="CHEBI:58374"/>
        <dbReference type="ChEBI" id="CHEBI:59903"/>
    </reaction>
</comment>
<comment type="cofactor">
    <cofactor evidence="4">
        <name>FAD</name>
        <dbReference type="ChEBI" id="CHEBI:57692"/>
    </cofactor>
    <text evidence="7">Binds 1 FAD per subunit.</text>
</comment>
<comment type="biophysicochemical properties">
    <kinetics>
        <KM evidence="4">38.3 uM for spermine (at pH 6.5 and 30 degrees Celsius)</KM>
        <KM evidence="4">59.4 uM for N(1)-acetylspermine (at pH 6.5 and 30 degrees Celsius)</KM>
        <KM evidence="4">75 uM for thermospermine (at pH 6.5 and 30 degrees Celsius)</KM>
        <KM evidence="4">78.8 uM for norspermine (at pH 6.5 and 30 degrees Celsius)</KM>
        <KM evidence="4">42.2 uM for spermidine (at pH 7.0 and 37 degrees Celsius)</KM>
        <KM evidence="4">80.3 uM for N(1)-acetylspermidine (at pH 7.0 and 37 degrees Celsius)</KM>
        <KM evidence="4">108.8 uM for norspermidine (at pH 7.0 and 37 degrees Celsius)</KM>
    </kinetics>
    <phDependence>
        <text evidence="4">Optimum pH is 7.0 with spermidine as substrate (PubMed:24634478). Optimum pH is 6.5 with spermine as substrate (PubMed:24634478).</text>
    </phDependence>
    <temperatureDependence>
        <text evidence="4">Optimum temperature is 37 degrees Celsius with spermidine as substrate (PubMed:24634478). Optimum temperature is 30 degrees Celsius with spermine as substrate (PubMed:24634478).</text>
    </temperatureDependence>
</comment>
<comment type="pathway">
    <text evidence="6">Amine and polyamine degradation; spermidine degradation.</text>
</comment>
<comment type="pathway">
    <text evidence="6">Amine and polyamine degradation; spermine degradation.</text>
</comment>
<comment type="subcellular location">
    <subcellularLocation>
        <location evidence="4">Secreted</location>
        <location evidence="4">Extracellular space</location>
        <location evidence="4">Apoplast</location>
    </subcellularLocation>
</comment>
<comment type="developmental stage">
    <text evidence="4">Specifically expressed during anther development, from the meiosis/tetrad pollen stage to the tricellular pollen stage, with a peak at the bicellular pollen stage.</text>
</comment>
<comment type="similarity">
    <text evidence="6">Belongs to the flavin monoamine oxidase family.</text>
</comment>
<comment type="sequence caution" evidence="6">
    <conflict type="erroneous initiation">
        <sequence resource="EMBL-CDS" id="BAD25916"/>
    </conflict>
    <text>Truncated N-terminus.</text>
</comment>
<comment type="sequence caution" evidence="6">
    <conflict type="erroneous initiation">
        <sequence resource="EMBL-CDS" id="BAD25973"/>
    </conflict>
    <text>Truncated N-terminus.</text>
</comment>
<organism>
    <name type="scientific">Oryza sativa subsp. japonica</name>
    <name type="common">Rice</name>
    <dbReference type="NCBI Taxonomy" id="39947"/>
    <lineage>
        <taxon>Eukaryota</taxon>
        <taxon>Viridiplantae</taxon>
        <taxon>Streptophyta</taxon>
        <taxon>Embryophyta</taxon>
        <taxon>Tracheophyta</taxon>
        <taxon>Spermatophyta</taxon>
        <taxon>Magnoliopsida</taxon>
        <taxon>Liliopsida</taxon>
        <taxon>Poales</taxon>
        <taxon>Poaceae</taxon>
        <taxon>BOP clade</taxon>
        <taxon>Oryzoideae</taxon>
        <taxon>Oryzeae</taxon>
        <taxon>Oryzinae</taxon>
        <taxon>Oryza</taxon>
        <taxon>Oryza sativa</taxon>
    </lineage>
</organism>
<sequence length="474" mass="53258">MTKPTTMAIFLSIVLLSMAQLPSLVAGTGRPRVIIIGAGISGISAGKRLSEAGITDILILEATDHIGGRMHKQRFAGVNVEIGANWVEGVNGEKMNPIWPIVNSTLKLRNFLSDFDSLAQNVYKDGGLCDAAYVQKRIDLADEADKSGENLSATLHPSGRDDMSILSMQRLNNHLPNGPSSPVDMVVDYFTYDYEFAEPPRVTSLRNTVPLPTFTDFGDDNYFVADQRGYEAVVYYLAGQYLEADKSGNIVDARLQLNKVVREISYSSTGVTVKTEDNSTYQADYVMVSASLGVLQSDLIQFKPQLPSWKILAIYQFDMAVYTKIFVKFPKKFWPEGAGREFFLYASTRRGYYGVWQEFEKQYPDANVLLVTVTDEESRRIEQQPDSQTKAEIMEVVRSMFPDEDVPDATDILVPRWWSDRFFQGSFSNWPIGVSRYEHDQLRAPVGRVYFTGEHTSERYNGYVHGAYLAGIYA</sequence>
<accession>Q0J290</accession>
<accession>Q6H5M6</accession>
<proteinExistence type="evidence at protein level"/>
<protein>
    <recommendedName>
        <fullName evidence="5">Polyamine oxidase 7</fullName>
        <shortName evidence="5">OsPAO7</shortName>
        <ecNumber evidence="4">1.5.3.-</ecNumber>
    </recommendedName>
</protein>
<name>PAO7_ORYSJ</name>
<keyword id="KW-0052">Apoplast</keyword>
<keyword id="KW-0274">FAD</keyword>
<keyword id="KW-0285">Flavoprotein</keyword>
<keyword id="KW-0325">Glycoprotein</keyword>
<keyword id="KW-0560">Oxidoreductase</keyword>
<keyword id="KW-1185">Reference proteome</keyword>
<keyword id="KW-0964">Secreted</keyword>
<keyword id="KW-0732">Signal</keyword>
<reference key="1">
    <citation type="journal article" date="2005" name="Nature">
        <title>The map-based sequence of the rice genome.</title>
        <authorList>
            <consortium name="International rice genome sequencing project (IRGSP)"/>
        </authorList>
    </citation>
    <scope>NUCLEOTIDE SEQUENCE [LARGE SCALE GENOMIC DNA]</scope>
    <source>
        <strain>cv. Nipponbare</strain>
    </source>
</reference>
<reference key="2">
    <citation type="journal article" date="2008" name="Nucleic Acids Res.">
        <title>The rice annotation project database (RAP-DB): 2008 update.</title>
        <authorList>
            <consortium name="The rice annotation project (RAP)"/>
        </authorList>
    </citation>
    <scope>GENOME REANNOTATION</scope>
    <source>
        <strain>cv. Nipponbare</strain>
    </source>
</reference>
<reference key="3">
    <citation type="journal article" date="2013" name="Rice">
        <title>Improvement of the Oryza sativa Nipponbare reference genome using next generation sequence and optical map data.</title>
        <authorList>
            <person name="Kawahara Y."/>
            <person name="de la Bastide M."/>
            <person name="Hamilton J.P."/>
            <person name="Kanamori H."/>
            <person name="McCombie W.R."/>
            <person name="Ouyang S."/>
            <person name="Schwartz D.C."/>
            <person name="Tanaka T."/>
            <person name="Wu J."/>
            <person name="Zhou S."/>
            <person name="Childs K.L."/>
            <person name="Davidson R.M."/>
            <person name="Lin H."/>
            <person name="Quesada-Ocampo L."/>
            <person name="Vaillancourt B."/>
            <person name="Sakai H."/>
            <person name="Lee S.S."/>
            <person name="Kim J."/>
            <person name="Numa H."/>
            <person name="Itoh T."/>
            <person name="Buell C.R."/>
            <person name="Matsumoto T."/>
        </authorList>
    </citation>
    <scope>GENOME REANNOTATION</scope>
    <source>
        <strain>cv. Nipponbare</strain>
    </source>
</reference>
<reference key="4">
    <citation type="journal article" date="2014" name="Plant Cell Physiol.">
        <title>Polyamine oxidase 7 is a terminal catabolism-type enzyme in Oryza sativa and is specifically expressed in anthers.</title>
        <authorList>
            <person name="Liu T."/>
            <person name="Kim D.W."/>
            <person name="Niitsu M."/>
            <person name="Maeda S."/>
            <person name="Watanabe M."/>
            <person name="Kamio Y."/>
            <person name="Berberich T."/>
            <person name="Kusano T."/>
        </authorList>
    </citation>
    <scope>FUNCTION</scope>
    <scope>CATALYTIC ACTIVITY</scope>
    <scope>COFACTOR</scope>
    <scope>BIOPHYSICOCHEMICAL PROPERTIES</scope>
    <scope>SUBCELLULAR LOCATION</scope>
    <scope>DEVELOPMENTAL STAGE</scope>
</reference>
<feature type="signal peptide" evidence="2">
    <location>
        <begin position="1"/>
        <end position="27"/>
    </location>
</feature>
<feature type="chain" id="PRO_5013530428" description="Polyamine oxidase 7">
    <location>
        <begin position="28"/>
        <end position="474"/>
    </location>
</feature>
<feature type="binding site" evidence="1">
    <location>
        <position position="61"/>
    </location>
    <ligand>
        <name>FAD</name>
        <dbReference type="ChEBI" id="CHEBI:57692"/>
    </ligand>
</feature>
<feature type="binding site" evidence="1">
    <location>
        <position position="69"/>
    </location>
    <ligand>
        <name>FAD</name>
        <dbReference type="ChEBI" id="CHEBI:57692"/>
    </ligand>
</feature>
<feature type="binding site" evidence="1">
    <location>
        <position position="261"/>
    </location>
    <ligand>
        <name>FAD</name>
        <dbReference type="ChEBI" id="CHEBI:57692"/>
    </ligand>
</feature>
<feature type="binding site" evidence="1">
    <location>
        <position position="454"/>
    </location>
    <ligand>
        <name>FAD</name>
        <dbReference type="ChEBI" id="CHEBI:57692"/>
    </ligand>
</feature>
<feature type="glycosylation site" description="N-linked (GlcNAc...) asparagine" evidence="3">
    <location>
        <position position="103"/>
    </location>
</feature>
<feature type="glycosylation site" description="N-linked (GlcNAc...) asparagine" evidence="3">
    <location>
        <position position="150"/>
    </location>
</feature>
<feature type="glycosylation site" description="N-linked (GlcNAc...) asparagine" evidence="3">
    <location>
        <position position="278"/>
    </location>
</feature>
<dbReference type="EC" id="1.5.3.-" evidence="4"/>
<dbReference type="EMBL" id="AP005525">
    <property type="protein sequence ID" value="BAD25916.1"/>
    <property type="status" value="ALT_INIT"/>
    <property type="molecule type" value="Genomic_DNA"/>
</dbReference>
<dbReference type="EMBL" id="AP005580">
    <property type="protein sequence ID" value="BAD25973.1"/>
    <property type="status" value="ALT_INIT"/>
    <property type="molecule type" value="Genomic_DNA"/>
</dbReference>
<dbReference type="EMBL" id="AP008215">
    <property type="protein sequence ID" value="BAF24925.1"/>
    <property type="molecule type" value="Genomic_DNA"/>
</dbReference>
<dbReference type="EMBL" id="AP014965">
    <property type="protein sequence ID" value="BAT07750.1"/>
    <property type="molecule type" value="Genomic_DNA"/>
</dbReference>
<dbReference type="SMR" id="Q0J290"/>
<dbReference type="FunCoup" id="Q0J290">
    <property type="interactions" value="18"/>
</dbReference>
<dbReference type="STRING" id="39947.Q0J290"/>
<dbReference type="GlyCosmos" id="Q0J290">
    <property type="glycosylation" value="3 sites, No reported glycans"/>
</dbReference>
<dbReference type="PaxDb" id="39947-Q0J290"/>
<dbReference type="EnsemblPlants" id="Os09t0368500-01">
    <property type="protein sequence ID" value="Os09t0368500-01"/>
    <property type="gene ID" value="Os09g0368500"/>
</dbReference>
<dbReference type="Gramene" id="Os09t0368500-01">
    <property type="protein sequence ID" value="Os09t0368500-01"/>
    <property type="gene ID" value="Os09g0368500"/>
</dbReference>
<dbReference type="KEGG" id="dosa:Os09g0368500"/>
<dbReference type="eggNOG" id="KOG0029">
    <property type="taxonomic scope" value="Eukaryota"/>
</dbReference>
<dbReference type="HOGENOM" id="CLU_004498_6_1_1"/>
<dbReference type="InParanoid" id="Q0J290"/>
<dbReference type="OMA" id="DELMIRC"/>
<dbReference type="BRENDA" id="1.5.3.14">
    <property type="organism ID" value="4460"/>
</dbReference>
<dbReference type="PlantReactome" id="R-OSA-1119567">
    <property type="pathway name" value="Beta-alanine biosynthesis I"/>
</dbReference>
<dbReference type="UniPathway" id="UPA00211"/>
<dbReference type="UniPathway" id="UPA00250"/>
<dbReference type="Proteomes" id="UP000000763">
    <property type="component" value="Chromosome 9"/>
</dbReference>
<dbReference type="Proteomes" id="UP000059680">
    <property type="component" value="Chromosome 9"/>
</dbReference>
<dbReference type="GO" id="GO:0048046">
    <property type="term" value="C:apoplast"/>
    <property type="evidence" value="ECO:0000314"/>
    <property type="project" value="UniProtKB"/>
</dbReference>
<dbReference type="GO" id="GO:0050660">
    <property type="term" value="F:flavin adenine dinucleotide binding"/>
    <property type="evidence" value="ECO:0000314"/>
    <property type="project" value="UniProtKB"/>
</dbReference>
<dbReference type="GO" id="GO:0052903">
    <property type="term" value="F:N(1)-acetylpolyamine oxidase (3-acetamidopropanal-forming) activity"/>
    <property type="evidence" value="ECO:0000314"/>
    <property type="project" value="UniProtKB"/>
</dbReference>
<dbReference type="GO" id="GO:0046592">
    <property type="term" value="F:polyamine oxidase activity"/>
    <property type="evidence" value="ECO:0000318"/>
    <property type="project" value="GO_Central"/>
</dbReference>
<dbReference type="GO" id="GO:0052901">
    <property type="term" value="F:spermine oxidase activity"/>
    <property type="evidence" value="ECO:0000314"/>
    <property type="project" value="UniProtKB"/>
</dbReference>
<dbReference type="GO" id="GO:1990534">
    <property type="term" value="F:thermospermine oxidase activity"/>
    <property type="evidence" value="ECO:0007669"/>
    <property type="project" value="RHEA"/>
</dbReference>
<dbReference type="GO" id="GO:0006598">
    <property type="term" value="P:polyamine catabolic process"/>
    <property type="evidence" value="ECO:0000318"/>
    <property type="project" value="GO_Central"/>
</dbReference>
<dbReference type="GO" id="GO:0046203">
    <property type="term" value="P:spermidine catabolic process"/>
    <property type="evidence" value="ECO:0000314"/>
    <property type="project" value="UniProtKB"/>
</dbReference>
<dbReference type="GO" id="GO:0046208">
    <property type="term" value="P:spermine catabolic process"/>
    <property type="evidence" value="ECO:0000314"/>
    <property type="project" value="UniProtKB"/>
</dbReference>
<dbReference type="GO" id="GO:1903602">
    <property type="term" value="P:thermospermine catabolic process"/>
    <property type="evidence" value="ECO:0000314"/>
    <property type="project" value="UniProtKB"/>
</dbReference>
<dbReference type="FunFam" id="3.90.660.10:FF:000012">
    <property type="entry name" value="Polyamine oxidase 1"/>
    <property type="match status" value="1"/>
</dbReference>
<dbReference type="Gene3D" id="3.90.660.10">
    <property type="match status" value="1"/>
</dbReference>
<dbReference type="Gene3D" id="3.50.50.60">
    <property type="entry name" value="FAD/NAD(P)-binding domain"/>
    <property type="match status" value="1"/>
</dbReference>
<dbReference type="InterPro" id="IPR002937">
    <property type="entry name" value="Amino_oxidase"/>
</dbReference>
<dbReference type="InterPro" id="IPR036188">
    <property type="entry name" value="FAD/NAD-bd_sf"/>
</dbReference>
<dbReference type="InterPro" id="IPR001613">
    <property type="entry name" value="Flavin_amine_oxidase"/>
</dbReference>
<dbReference type="InterPro" id="IPR050281">
    <property type="entry name" value="Flavin_monoamine_oxidase"/>
</dbReference>
<dbReference type="PANTHER" id="PTHR10742:SF313">
    <property type="entry name" value="AMINE OXIDASE"/>
    <property type="match status" value="1"/>
</dbReference>
<dbReference type="PANTHER" id="PTHR10742">
    <property type="entry name" value="FLAVIN MONOAMINE OXIDASE"/>
    <property type="match status" value="1"/>
</dbReference>
<dbReference type="Pfam" id="PF01593">
    <property type="entry name" value="Amino_oxidase"/>
    <property type="match status" value="1"/>
</dbReference>
<dbReference type="PRINTS" id="PR00757">
    <property type="entry name" value="AMINEOXDASEF"/>
</dbReference>
<dbReference type="SUPFAM" id="SSF54373">
    <property type="entry name" value="FAD-linked reductases, C-terminal domain"/>
    <property type="match status" value="1"/>
</dbReference>
<dbReference type="SUPFAM" id="SSF51905">
    <property type="entry name" value="FAD/NAD(P)-binding domain"/>
    <property type="match status" value="1"/>
</dbReference>
<gene>
    <name evidence="5" type="primary">PAO7</name>
    <name evidence="8" type="ordered locus">Os09g0368500</name>
    <name evidence="6" type="ordered locus">LOC_Os09g20284</name>
    <name evidence="8" type="ORF">OSNPB_090368500</name>
</gene>
<evidence type="ECO:0000250" key="1">
    <source>
        <dbReference type="UniProtKB" id="O64411"/>
    </source>
</evidence>
<evidence type="ECO:0000255" key="2"/>
<evidence type="ECO:0000255" key="3">
    <source>
        <dbReference type="PROSITE-ProRule" id="PRU00498"/>
    </source>
</evidence>
<evidence type="ECO:0000269" key="4">
    <source>
    </source>
</evidence>
<evidence type="ECO:0000303" key="5">
    <source>
    </source>
</evidence>
<evidence type="ECO:0000305" key="6"/>
<evidence type="ECO:0000305" key="7">
    <source>
    </source>
</evidence>
<evidence type="ECO:0000312" key="8">
    <source>
        <dbReference type="EMBL" id="BAT07750.1"/>
    </source>
</evidence>